<reference key="1">
    <citation type="journal article" date="1995" name="EMBO J.">
        <title>Anaerobic transcription activation in Bacillus subtilis: identification of distinct FNR-dependent and -independent regulatory mechanisms.</title>
        <authorList>
            <person name="Cruz Ramos H."/>
            <person name="Boursier L."/>
            <person name="Moszer I."/>
            <person name="Kunst F."/>
            <person name="Danchin A."/>
            <person name="Glaser P."/>
        </authorList>
    </citation>
    <scope>NUCLEOTIDE SEQUENCE [GENOMIC DNA]</scope>
</reference>
<reference key="2">
    <citation type="journal article" date="1997" name="Microbiology">
        <title>The Bacillus subtilis genome from gerBC (311 degrees) to licR (334 degrees).</title>
        <authorList>
            <person name="Presecan E."/>
            <person name="Moszer I."/>
            <person name="Boursier L."/>
            <person name="Cruz Ramos H."/>
            <person name="De La Fuente V."/>
            <person name="Hullo M.-F."/>
            <person name="Lelong C."/>
            <person name="Schleich S."/>
            <person name="Sekowska A."/>
            <person name="Song B.H."/>
            <person name="Villani G."/>
            <person name="Kunst F."/>
            <person name="Danchin A."/>
            <person name="Glaser P."/>
        </authorList>
    </citation>
    <scope>NUCLEOTIDE SEQUENCE [GENOMIC DNA]</scope>
    <source>
        <strain>168</strain>
    </source>
</reference>
<reference key="3">
    <citation type="journal article" date="1995" name="FEMS Microbiol. Lett.">
        <title>The anaerobic life of Bacillus subtilis: cloning of the genes encoding the respiratory nitrate reductase system.</title>
        <authorList>
            <person name="Hoffmann T."/>
            <person name="Troup B."/>
            <person name="Szabo A."/>
            <person name="Hungerer C."/>
            <person name="Jahn D."/>
        </authorList>
    </citation>
    <scope>NUCLEOTIDE SEQUENCE [GENOMIC DNA]</scope>
    <source>
        <strain>168 / JH642</strain>
    </source>
</reference>
<reference key="4">
    <citation type="journal article" date="1997" name="Nature">
        <title>The complete genome sequence of the Gram-positive bacterium Bacillus subtilis.</title>
        <authorList>
            <person name="Kunst F."/>
            <person name="Ogasawara N."/>
            <person name="Moszer I."/>
            <person name="Albertini A.M."/>
            <person name="Alloni G."/>
            <person name="Azevedo V."/>
            <person name="Bertero M.G."/>
            <person name="Bessieres P."/>
            <person name="Bolotin A."/>
            <person name="Borchert S."/>
            <person name="Borriss R."/>
            <person name="Boursier L."/>
            <person name="Brans A."/>
            <person name="Braun M."/>
            <person name="Brignell S.C."/>
            <person name="Bron S."/>
            <person name="Brouillet S."/>
            <person name="Bruschi C.V."/>
            <person name="Caldwell B."/>
            <person name="Capuano V."/>
            <person name="Carter N.M."/>
            <person name="Choi S.-K."/>
            <person name="Codani J.-J."/>
            <person name="Connerton I.F."/>
            <person name="Cummings N.J."/>
            <person name="Daniel R.A."/>
            <person name="Denizot F."/>
            <person name="Devine K.M."/>
            <person name="Duesterhoeft A."/>
            <person name="Ehrlich S.D."/>
            <person name="Emmerson P.T."/>
            <person name="Entian K.-D."/>
            <person name="Errington J."/>
            <person name="Fabret C."/>
            <person name="Ferrari E."/>
            <person name="Foulger D."/>
            <person name="Fritz C."/>
            <person name="Fujita M."/>
            <person name="Fujita Y."/>
            <person name="Fuma S."/>
            <person name="Galizzi A."/>
            <person name="Galleron N."/>
            <person name="Ghim S.-Y."/>
            <person name="Glaser P."/>
            <person name="Goffeau A."/>
            <person name="Golightly E.J."/>
            <person name="Grandi G."/>
            <person name="Guiseppi G."/>
            <person name="Guy B.J."/>
            <person name="Haga K."/>
            <person name="Haiech J."/>
            <person name="Harwood C.R."/>
            <person name="Henaut A."/>
            <person name="Hilbert H."/>
            <person name="Holsappel S."/>
            <person name="Hosono S."/>
            <person name="Hullo M.-F."/>
            <person name="Itaya M."/>
            <person name="Jones L.-M."/>
            <person name="Joris B."/>
            <person name="Karamata D."/>
            <person name="Kasahara Y."/>
            <person name="Klaerr-Blanchard M."/>
            <person name="Klein C."/>
            <person name="Kobayashi Y."/>
            <person name="Koetter P."/>
            <person name="Koningstein G."/>
            <person name="Krogh S."/>
            <person name="Kumano M."/>
            <person name="Kurita K."/>
            <person name="Lapidus A."/>
            <person name="Lardinois S."/>
            <person name="Lauber J."/>
            <person name="Lazarevic V."/>
            <person name="Lee S.-M."/>
            <person name="Levine A."/>
            <person name="Liu H."/>
            <person name="Masuda S."/>
            <person name="Mauel C."/>
            <person name="Medigue C."/>
            <person name="Medina N."/>
            <person name="Mellado R.P."/>
            <person name="Mizuno M."/>
            <person name="Moestl D."/>
            <person name="Nakai S."/>
            <person name="Noback M."/>
            <person name="Noone D."/>
            <person name="O'Reilly M."/>
            <person name="Ogawa K."/>
            <person name="Ogiwara A."/>
            <person name="Oudega B."/>
            <person name="Park S.-H."/>
            <person name="Parro V."/>
            <person name="Pohl T.M."/>
            <person name="Portetelle D."/>
            <person name="Porwollik S."/>
            <person name="Prescott A.M."/>
            <person name="Presecan E."/>
            <person name="Pujic P."/>
            <person name="Purnelle B."/>
            <person name="Rapoport G."/>
            <person name="Rey M."/>
            <person name="Reynolds S."/>
            <person name="Rieger M."/>
            <person name="Rivolta C."/>
            <person name="Rocha E."/>
            <person name="Roche B."/>
            <person name="Rose M."/>
            <person name="Sadaie Y."/>
            <person name="Sato T."/>
            <person name="Scanlan E."/>
            <person name="Schleich S."/>
            <person name="Schroeter R."/>
            <person name="Scoffone F."/>
            <person name="Sekiguchi J."/>
            <person name="Sekowska A."/>
            <person name="Seror S.J."/>
            <person name="Serror P."/>
            <person name="Shin B.-S."/>
            <person name="Soldo B."/>
            <person name="Sorokin A."/>
            <person name="Tacconi E."/>
            <person name="Takagi T."/>
            <person name="Takahashi H."/>
            <person name="Takemaru K."/>
            <person name="Takeuchi M."/>
            <person name="Tamakoshi A."/>
            <person name="Tanaka T."/>
            <person name="Terpstra P."/>
            <person name="Tognoni A."/>
            <person name="Tosato V."/>
            <person name="Uchiyama S."/>
            <person name="Vandenbol M."/>
            <person name="Vannier F."/>
            <person name="Vassarotti A."/>
            <person name="Viari A."/>
            <person name="Wambutt R."/>
            <person name="Wedler E."/>
            <person name="Wedler H."/>
            <person name="Weitzenegger T."/>
            <person name="Winters P."/>
            <person name="Wipat A."/>
            <person name="Yamamoto H."/>
            <person name="Yamane K."/>
            <person name="Yasumoto K."/>
            <person name="Yata K."/>
            <person name="Yoshida K."/>
            <person name="Yoshikawa H.-F."/>
            <person name="Zumstein E."/>
            <person name="Yoshikawa H."/>
            <person name="Danchin A."/>
        </authorList>
    </citation>
    <scope>NUCLEOTIDE SEQUENCE [LARGE SCALE GENOMIC DNA]</scope>
    <source>
        <strain>168</strain>
    </source>
</reference>
<dbReference type="EC" id="1.7.5.1"/>
<dbReference type="EMBL" id="Z49884">
    <property type="protein sequence ID" value="CAA90046.1"/>
    <property type="molecule type" value="Genomic_DNA"/>
</dbReference>
<dbReference type="EMBL" id="X91819">
    <property type="protein sequence ID" value="CAA62927.1"/>
    <property type="molecule type" value="Genomic_DNA"/>
</dbReference>
<dbReference type="EMBL" id="X85014">
    <property type="protein sequence ID" value="CAA59372.1"/>
    <property type="molecule type" value="Genomic_DNA"/>
</dbReference>
<dbReference type="EMBL" id="AL009126">
    <property type="protein sequence ID" value="CAB15755.1"/>
    <property type="molecule type" value="Genomic_DNA"/>
</dbReference>
<dbReference type="PIR" id="S60086">
    <property type="entry name" value="S60573"/>
</dbReference>
<dbReference type="RefSeq" id="NP_391608.1">
    <property type="nucleotide sequence ID" value="NC_000964.3"/>
</dbReference>
<dbReference type="RefSeq" id="WP_003244173.1">
    <property type="nucleotide sequence ID" value="NZ_OZ025638.1"/>
</dbReference>
<dbReference type="SMR" id="P42176"/>
<dbReference type="FunCoup" id="P42176">
    <property type="interactions" value="160"/>
</dbReference>
<dbReference type="STRING" id="224308.BSU37270"/>
<dbReference type="jPOST" id="P42176"/>
<dbReference type="PaxDb" id="224308-BSU37270"/>
<dbReference type="EnsemblBacteria" id="CAB15755">
    <property type="protein sequence ID" value="CAB15755"/>
    <property type="gene ID" value="BSU_37270"/>
</dbReference>
<dbReference type="GeneID" id="937047"/>
<dbReference type="KEGG" id="bsu:BSU37270"/>
<dbReference type="PATRIC" id="fig|224308.179.peg.4038"/>
<dbReference type="eggNOG" id="COG1140">
    <property type="taxonomic scope" value="Bacteria"/>
</dbReference>
<dbReference type="InParanoid" id="P42176"/>
<dbReference type="OrthoDB" id="9779457at2"/>
<dbReference type="PhylomeDB" id="P42176"/>
<dbReference type="BioCyc" id="BSUB:BSU37270-MONOMER"/>
<dbReference type="Proteomes" id="UP000001570">
    <property type="component" value="Chromosome"/>
</dbReference>
<dbReference type="GO" id="GO:0016020">
    <property type="term" value="C:membrane"/>
    <property type="evidence" value="ECO:0000318"/>
    <property type="project" value="GO_Central"/>
</dbReference>
<dbReference type="GO" id="GO:0009325">
    <property type="term" value="C:nitrate reductase complex"/>
    <property type="evidence" value="ECO:0007669"/>
    <property type="project" value="InterPro"/>
</dbReference>
<dbReference type="GO" id="GO:0005886">
    <property type="term" value="C:plasma membrane"/>
    <property type="evidence" value="ECO:0007669"/>
    <property type="project" value="UniProtKB-SubCell"/>
</dbReference>
<dbReference type="GO" id="GO:0051538">
    <property type="term" value="F:3 iron, 4 sulfur cluster binding"/>
    <property type="evidence" value="ECO:0007669"/>
    <property type="project" value="UniProtKB-KW"/>
</dbReference>
<dbReference type="GO" id="GO:0051539">
    <property type="term" value="F:4 iron, 4 sulfur cluster binding"/>
    <property type="evidence" value="ECO:0007669"/>
    <property type="project" value="UniProtKB-KW"/>
</dbReference>
<dbReference type="GO" id="GO:0009055">
    <property type="term" value="F:electron transfer activity"/>
    <property type="evidence" value="ECO:0000318"/>
    <property type="project" value="GO_Central"/>
</dbReference>
<dbReference type="GO" id="GO:0046872">
    <property type="term" value="F:metal ion binding"/>
    <property type="evidence" value="ECO:0007669"/>
    <property type="project" value="UniProtKB-KW"/>
</dbReference>
<dbReference type="GO" id="GO:0160182">
    <property type="term" value="F:nitrate reductase (quinone) activity"/>
    <property type="evidence" value="ECO:0007669"/>
    <property type="project" value="UniProtKB-EC"/>
</dbReference>
<dbReference type="GO" id="GO:0009061">
    <property type="term" value="P:anaerobic respiration"/>
    <property type="evidence" value="ECO:0000318"/>
    <property type="project" value="GO_Central"/>
</dbReference>
<dbReference type="GO" id="GO:0042128">
    <property type="term" value="P:nitrate assimilation"/>
    <property type="evidence" value="ECO:0007669"/>
    <property type="project" value="UniProtKB-KW"/>
</dbReference>
<dbReference type="CDD" id="cd10557">
    <property type="entry name" value="NarH_beta-like"/>
    <property type="match status" value="1"/>
</dbReference>
<dbReference type="FunFam" id="3.30.70.20:FF:000008">
    <property type="entry name" value="Respiratory nitrate reductase beta subunit"/>
    <property type="match status" value="1"/>
</dbReference>
<dbReference type="FunFam" id="3.30.70.20:FF:000010">
    <property type="entry name" value="Respiratory nitrate reductase beta subunit"/>
    <property type="match status" value="1"/>
</dbReference>
<dbReference type="FunFam" id="1.10.3650.10:FF:000001">
    <property type="entry name" value="Respiratory nitrate reductase subunit beta"/>
    <property type="match status" value="1"/>
</dbReference>
<dbReference type="Gene3D" id="3.30.70.20">
    <property type="match status" value="3"/>
</dbReference>
<dbReference type="Gene3D" id="1.10.3650.10">
    <property type="entry name" value="nitrate reductase domain like"/>
    <property type="match status" value="1"/>
</dbReference>
<dbReference type="InterPro" id="IPR017896">
    <property type="entry name" value="4Fe4S_Fe-S-bd"/>
</dbReference>
<dbReference type="InterPro" id="IPR029263">
    <property type="entry name" value="Nitr_red_bet_C"/>
</dbReference>
<dbReference type="InterPro" id="IPR038262">
    <property type="entry name" value="Nitr_red_bet_C_sf"/>
</dbReference>
<dbReference type="InterPro" id="IPR006547">
    <property type="entry name" value="NO3_Rdtase_bsu"/>
</dbReference>
<dbReference type="NCBIfam" id="TIGR01660">
    <property type="entry name" value="narH"/>
    <property type="match status" value="1"/>
</dbReference>
<dbReference type="PANTHER" id="PTHR43518">
    <property type="entry name" value="NITRATE REDUCTASE BETA SUBUNIT"/>
    <property type="match status" value="1"/>
</dbReference>
<dbReference type="PANTHER" id="PTHR43518:SF1">
    <property type="entry name" value="RESPIRATORY NITRATE REDUCTASE 1 BETA CHAIN"/>
    <property type="match status" value="1"/>
</dbReference>
<dbReference type="Pfam" id="PF13247">
    <property type="entry name" value="Fer4_11"/>
    <property type="match status" value="1"/>
</dbReference>
<dbReference type="Pfam" id="PF14711">
    <property type="entry name" value="Nitr_red_bet_C"/>
    <property type="match status" value="1"/>
</dbReference>
<dbReference type="SUPFAM" id="SSF54862">
    <property type="entry name" value="4Fe-4S ferredoxins"/>
    <property type="match status" value="1"/>
</dbReference>
<dbReference type="PROSITE" id="PS51379">
    <property type="entry name" value="4FE4S_FER_2"/>
    <property type="match status" value="3"/>
</dbReference>
<comment type="function">
    <text>The beta chain is an electron transfer unit containing four cysteine clusters involved in the formation of iron-sulfur centers. Electrons are transferred from the gamma chain to the molybdenum cofactor of the alpha subunit.</text>
</comment>
<comment type="catalytic activity">
    <reaction>
        <text>nitrate + a quinol = a quinone + nitrite + H2O</text>
        <dbReference type="Rhea" id="RHEA:56144"/>
        <dbReference type="ChEBI" id="CHEBI:15377"/>
        <dbReference type="ChEBI" id="CHEBI:16301"/>
        <dbReference type="ChEBI" id="CHEBI:17632"/>
        <dbReference type="ChEBI" id="CHEBI:24646"/>
        <dbReference type="ChEBI" id="CHEBI:132124"/>
        <dbReference type="EC" id="1.7.5.1"/>
    </reaction>
</comment>
<comment type="cofactor">
    <cofactor evidence="2">
        <name>[4Fe-4S] cluster</name>
        <dbReference type="ChEBI" id="CHEBI:49883"/>
    </cofactor>
    <text evidence="2">Binds 3 [4Fe-4S] clusters per subunit.</text>
</comment>
<comment type="cofactor">
    <cofactor evidence="2">
        <name>[3Fe-4S] cluster</name>
        <dbReference type="ChEBI" id="CHEBI:21137"/>
    </cofactor>
    <text evidence="2">Binds 1 [3Fe-4S] cluster per subunit.</text>
</comment>
<comment type="subcellular location">
    <subcellularLocation>
        <location evidence="1">Cell membrane</location>
        <topology evidence="1">Peripheral membrane protein</topology>
    </subcellularLocation>
</comment>
<organism>
    <name type="scientific">Bacillus subtilis (strain 168)</name>
    <dbReference type="NCBI Taxonomy" id="224308"/>
    <lineage>
        <taxon>Bacteria</taxon>
        <taxon>Bacillati</taxon>
        <taxon>Bacillota</taxon>
        <taxon>Bacilli</taxon>
        <taxon>Bacillales</taxon>
        <taxon>Bacillaceae</taxon>
        <taxon>Bacillus</taxon>
    </lineage>
</organism>
<gene>
    <name type="primary">narH</name>
    <name type="ordered locus">BSU37270</name>
</gene>
<keyword id="KW-0003">3Fe-4S</keyword>
<keyword id="KW-0004">4Fe-4S</keyword>
<keyword id="KW-1003">Cell membrane</keyword>
<keyword id="KW-0249">Electron transport</keyword>
<keyword id="KW-0408">Iron</keyword>
<keyword id="KW-0411">Iron-sulfur</keyword>
<keyword id="KW-0472">Membrane</keyword>
<keyword id="KW-0479">Metal-binding</keyword>
<keyword id="KW-0534">Nitrate assimilation</keyword>
<keyword id="KW-0560">Oxidoreductase</keyword>
<keyword id="KW-1185">Reference proteome</keyword>
<keyword id="KW-0677">Repeat</keyword>
<keyword id="KW-0813">Transport</keyword>
<accession>P42176</accession>
<sequence>MKIKAQIGMVMNLDKCIGCHTCSVTCKNTWTNRSGAEYMYFNNVETKPGIGYPKQWEDQDKYKGGWTLKKGKLELKSGSKTNRLAGLFYNPNQPSIDDYYEPWNYDYETLTNSPQKKHQPVARPKSSLTGDFMNIEWGPNWEDDLAGGHITGLEDPNVQKMEESIKTEFDDVFMMYLPRICEHCINPACVSSCPSGAMYKREEDGIVLVDQNACRSWRYCVSSCPYKKVYFNWQTNKAEKCTLCFPRLEAGLPTICSETCVGRIRYLGVMLYDADKVEEAASVENEKDLYHSQLDVFLDPNDPEVAKLAKEQGIPAEWIEAAQQSPIYKMIIDWKIALPLHPEYRTLPMVWYIPPLSPIMNLFEGKGSRQTAEDIFPAIDQMRIPIDYLAQLLTAGDTDHIRSTLKKMSVMRQYMRAVQTNKSIDPELISSVGLTEQQIEDMYRLLAIAKYDDRFVIPSSHREEVSDLYAEQGSCGLSFSGGPGSCF</sequence>
<name>NARH_BACSU</name>
<evidence type="ECO:0000250" key="1"/>
<evidence type="ECO:0000250" key="2">
    <source>
        <dbReference type="UniProtKB" id="P11349"/>
    </source>
</evidence>
<evidence type="ECO:0000255" key="3">
    <source>
        <dbReference type="PROSITE-ProRule" id="PRU00711"/>
    </source>
</evidence>
<evidence type="ECO:0000305" key="4"/>
<proteinExistence type="inferred from homology"/>
<feature type="chain" id="PRO_0000096719" description="Nitrate reductase beta chain">
    <location>
        <begin position="1"/>
        <end position="487"/>
    </location>
</feature>
<feature type="domain" description="4Fe-4S ferredoxin-type 1" evidence="3">
    <location>
        <begin position="7"/>
        <end position="36"/>
    </location>
</feature>
<feature type="domain" description="4Fe-4S ferredoxin-type 2" evidence="3">
    <location>
        <begin position="172"/>
        <end position="203"/>
    </location>
</feature>
<feature type="domain" description="4Fe-4S ferredoxin-type 3" evidence="3">
    <location>
        <begin position="205"/>
        <end position="234"/>
    </location>
</feature>
<feature type="binding site" evidence="2">
    <location>
        <position position="16"/>
    </location>
    <ligand>
        <name>[4Fe-4S] cluster</name>
        <dbReference type="ChEBI" id="CHEBI:49883"/>
        <label>1</label>
    </ligand>
</feature>
<feature type="binding site" evidence="2">
    <location>
        <position position="19"/>
    </location>
    <ligand>
        <name>[4Fe-4S] cluster</name>
        <dbReference type="ChEBI" id="CHEBI:49883"/>
        <label>1</label>
    </ligand>
</feature>
<feature type="binding site" evidence="2">
    <location>
        <position position="22"/>
    </location>
    <ligand>
        <name>[4Fe-4S] cluster</name>
        <dbReference type="ChEBI" id="CHEBI:49883"/>
        <label>1</label>
    </ligand>
</feature>
<feature type="binding site" evidence="2">
    <location>
        <position position="26"/>
    </location>
    <ligand>
        <name>[4Fe-4S] cluster</name>
        <dbReference type="ChEBI" id="CHEBI:49883"/>
        <label>2</label>
    </ligand>
</feature>
<feature type="binding site" evidence="2">
    <location>
        <position position="181"/>
    </location>
    <ligand>
        <name>[4Fe-4S] cluster</name>
        <dbReference type="ChEBI" id="CHEBI:49883"/>
        <label>3</label>
    </ligand>
</feature>
<feature type="binding site" evidence="2">
    <location>
        <position position="184"/>
    </location>
    <ligand>
        <name>[4Fe-4S] cluster</name>
        <dbReference type="ChEBI" id="CHEBI:49883"/>
        <label>3</label>
    </ligand>
</feature>
<feature type="binding site" evidence="2">
    <location>
        <position position="189"/>
    </location>
    <ligand>
        <name>[4Fe-4S] cluster</name>
        <dbReference type="ChEBI" id="CHEBI:49883"/>
        <label>3</label>
    </ligand>
</feature>
<feature type="binding site" evidence="2">
    <location>
        <position position="193"/>
    </location>
    <ligand>
        <name>[3Fe-4S] cluster</name>
        <dbReference type="ChEBI" id="CHEBI:21137"/>
    </ligand>
</feature>
<feature type="binding site" evidence="2">
    <location>
        <position position="214"/>
    </location>
    <ligand>
        <name>[3Fe-4S] cluster</name>
        <dbReference type="ChEBI" id="CHEBI:21137"/>
    </ligand>
</feature>
<feature type="binding site" evidence="2">
    <location>
        <position position="220"/>
    </location>
    <ligand>
        <name>[3Fe-4S] cluster</name>
        <dbReference type="ChEBI" id="CHEBI:21137"/>
    </ligand>
</feature>
<feature type="binding site" evidence="2">
    <location>
        <position position="224"/>
    </location>
    <ligand>
        <name>[4Fe-4S] cluster</name>
        <dbReference type="ChEBI" id="CHEBI:49883"/>
        <label>3</label>
    </ligand>
</feature>
<feature type="binding site" evidence="2">
    <location>
        <position position="241"/>
    </location>
    <ligand>
        <name>[4Fe-4S] cluster</name>
        <dbReference type="ChEBI" id="CHEBI:49883"/>
        <label>2</label>
    </ligand>
</feature>
<feature type="binding site" evidence="2">
    <location>
        <position position="244"/>
    </location>
    <ligand>
        <name>[4Fe-4S] cluster</name>
        <dbReference type="ChEBI" id="CHEBI:49883"/>
        <label>2</label>
    </ligand>
</feature>
<feature type="binding site" evidence="2">
    <location>
        <position position="256"/>
    </location>
    <ligand>
        <name>[4Fe-4S] cluster</name>
        <dbReference type="ChEBI" id="CHEBI:49883"/>
        <label>2</label>
    </ligand>
</feature>
<feature type="binding site" evidence="2">
    <location>
        <position position="260"/>
    </location>
    <ligand>
        <name>[4Fe-4S] cluster</name>
        <dbReference type="ChEBI" id="CHEBI:49883"/>
        <label>1</label>
    </ligand>
</feature>
<feature type="sequence conflict" description="In Ref. 3; CAA62927/CAA59372." evidence="4" ref="3">
    <original>T</original>
    <variation>A</variation>
    <location>
        <position position="21"/>
    </location>
</feature>
<feature type="sequence conflict" description="In Ref. 3; CAA62927/CAA59372." evidence="4" ref="3">
    <original>M</original>
    <variation>I</variation>
    <location>
        <position position="174"/>
    </location>
</feature>
<protein>
    <recommendedName>
        <fullName>Nitrate reductase beta chain</fullName>
        <ecNumber>1.7.5.1</ecNumber>
    </recommendedName>
</protein>